<accession>A1VG87</accession>
<feature type="chain" id="PRO_1000054777" description="Small ribosomal subunit protein uS15">
    <location>
        <begin position="1"/>
        <end position="89"/>
    </location>
</feature>
<proteinExistence type="inferred from homology"/>
<name>RS15_NITV4</name>
<dbReference type="EMBL" id="CP000527">
    <property type="protein sequence ID" value="ABM29453.1"/>
    <property type="molecule type" value="Genomic_DNA"/>
</dbReference>
<dbReference type="SMR" id="A1VG87"/>
<dbReference type="KEGG" id="dvl:Dvul_2437"/>
<dbReference type="HOGENOM" id="CLU_148518_0_0_7"/>
<dbReference type="Proteomes" id="UP000009173">
    <property type="component" value="Chromosome"/>
</dbReference>
<dbReference type="GO" id="GO:0022627">
    <property type="term" value="C:cytosolic small ribosomal subunit"/>
    <property type="evidence" value="ECO:0007669"/>
    <property type="project" value="TreeGrafter"/>
</dbReference>
<dbReference type="GO" id="GO:0019843">
    <property type="term" value="F:rRNA binding"/>
    <property type="evidence" value="ECO:0007669"/>
    <property type="project" value="UniProtKB-UniRule"/>
</dbReference>
<dbReference type="GO" id="GO:0003735">
    <property type="term" value="F:structural constituent of ribosome"/>
    <property type="evidence" value="ECO:0007669"/>
    <property type="project" value="InterPro"/>
</dbReference>
<dbReference type="GO" id="GO:0006412">
    <property type="term" value="P:translation"/>
    <property type="evidence" value="ECO:0007669"/>
    <property type="project" value="UniProtKB-UniRule"/>
</dbReference>
<dbReference type="CDD" id="cd00353">
    <property type="entry name" value="Ribosomal_S15p_S13e"/>
    <property type="match status" value="1"/>
</dbReference>
<dbReference type="FunFam" id="1.10.287.10:FF:000002">
    <property type="entry name" value="30S ribosomal protein S15"/>
    <property type="match status" value="1"/>
</dbReference>
<dbReference type="Gene3D" id="6.10.250.3130">
    <property type="match status" value="1"/>
</dbReference>
<dbReference type="Gene3D" id="1.10.287.10">
    <property type="entry name" value="S15/NS1, RNA-binding"/>
    <property type="match status" value="1"/>
</dbReference>
<dbReference type="HAMAP" id="MF_01343_B">
    <property type="entry name" value="Ribosomal_uS15_B"/>
    <property type="match status" value="1"/>
</dbReference>
<dbReference type="InterPro" id="IPR000589">
    <property type="entry name" value="Ribosomal_uS15"/>
</dbReference>
<dbReference type="InterPro" id="IPR005290">
    <property type="entry name" value="Ribosomal_uS15_bac-type"/>
</dbReference>
<dbReference type="InterPro" id="IPR009068">
    <property type="entry name" value="uS15_NS1_RNA-bd_sf"/>
</dbReference>
<dbReference type="NCBIfam" id="TIGR00952">
    <property type="entry name" value="S15_bact"/>
    <property type="match status" value="1"/>
</dbReference>
<dbReference type="PANTHER" id="PTHR23321">
    <property type="entry name" value="RIBOSOMAL PROTEIN S15, BACTERIAL AND ORGANELLAR"/>
    <property type="match status" value="1"/>
</dbReference>
<dbReference type="PANTHER" id="PTHR23321:SF26">
    <property type="entry name" value="SMALL RIBOSOMAL SUBUNIT PROTEIN US15M"/>
    <property type="match status" value="1"/>
</dbReference>
<dbReference type="Pfam" id="PF00312">
    <property type="entry name" value="Ribosomal_S15"/>
    <property type="match status" value="1"/>
</dbReference>
<dbReference type="SMART" id="SM01387">
    <property type="entry name" value="Ribosomal_S15"/>
    <property type="match status" value="1"/>
</dbReference>
<dbReference type="SUPFAM" id="SSF47060">
    <property type="entry name" value="S15/NS1 RNA-binding domain"/>
    <property type="match status" value="1"/>
</dbReference>
<dbReference type="PROSITE" id="PS00362">
    <property type="entry name" value="RIBOSOMAL_S15"/>
    <property type="match status" value="1"/>
</dbReference>
<reference key="1">
    <citation type="journal article" date="2009" name="Environ. Microbiol.">
        <title>Contribution of mobile genetic elements to Desulfovibrio vulgaris genome plasticity.</title>
        <authorList>
            <person name="Walker C.B."/>
            <person name="Stolyar S."/>
            <person name="Chivian D."/>
            <person name="Pinel N."/>
            <person name="Gabster J.A."/>
            <person name="Dehal P.S."/>
            <person name="He Z."/>
            <person name="Yang Z.K."/>
            <person name="Yen H.C."/>
            <person name="Zhou J."/>
            <person name="Wall J.D."/>
            <person name="Hazen T.C."/>
            <person name="Arkin A.P."/>
            <person name="Stahl D.A."/>
        </authorList>
    </citation>
    <scope>NUCLEOTIDE SEQUENCE [LARGE SCALE GENOMIC DNA]</scope>
    <source>
        <strain>DP4</strain>
    </source>
</reference>
<sequence length="89" mass="10230">MVMDIEAKKAVIDAHAKHEGDTGSPEVQVALLTARIEQLTGHFKVHKKDYHSRTGLLKLVGQRRKLLNYLKKKDVQRYRALIEKLGLRK</sequence>
<evidence type="ECO:0000255" key="1">
    <source>
        <dbReference type="HAMAP-Rule" id="MF_01343"/>
    </source>
</evidence>
<evidence type="ECO:0000305" key="2"/>
<gene>
    <name evidence="1" type="primary">rpsO</name>
    <name type="ordered locus">Dvul_2437</name>
</gene>
<keyword id="KW-0687">Ribonucleoprotein</keyword>
<keyword id="KW-0689">Ribosomal protein</keyword>
<keyword id="KW-0694">RNA-binding</keyword>
<keyword id="KW-0699">rRNA-binding</keyword>
<comment type="function">
    <text evidence="1">One of the primary rRNA binding proteins, it binds directly to 16S rRNA where it helps nucleate assembly of the platform of the 30S subunit by binding and bridging several RNA helices of the 16S rRNA.</text>
</comment>
<comment type="function">
    <text evidence="1">Forms an intersubunit bridge (bridge B4) with the 23S rRNA of the 50S subunit in the ribosome.</text>
</comment>
<comment type="subunit">
    <text evidence="1">Part of the 30S ribosomal subunit. Forms a bridge to the 50S subunit in the 70S ribosome, contacting the 23S rRNA.</text>
</comment>
<comment type="similarity">
    <text evidence="1">Belongs to the universal ribosomal protein uS15 family.</text>
</comment>
<protein>
    <recommendedName>
        <fullName evidence="1">Small ribosomal subunit protein uS15</fullName>
    </recommendedName>
    <alternativeName>
        <fullName evidence="2">30S ribosomal protein S15</fullName>
    </alternativeName>
</protein>
<organism>
    <name type="scientific">Nitratidesulfovibrio vulgaris (strain DP4)</name>
    <name type="common">Desulfovibrio vulgaris</name>
    <dbReference type="NCBI Taxonomy" id="391774"/>
    <lineage>
        <taxon>Bacteria</taxon>
        <taxon>Pseudomonadati</taxon>
        <taxon>Thermodesulfobacteriota</taxon>
        <taxon>Desulfovibrionia</taxon>
        <taxon>Desulfovibrionales</taxon>
        <taxon>Desulfovibrionaceae</taxon>
        <taxon>Nitratidesulfovibrio</taxon>
    </lineage>
</organism>